<keyword id="KW-0256">Endoplasmic reticulum</keyword>
<keyword id="KW-0325">Glycoprotein</keyword>
<keyword id="KW-0328">Glycosyltransferase</keyword>
<keyword id="KW-0472">Membrane</keyword>
<keyword id="KW-1185">Reference proteome</keyword>
<keyword id="KW-0808">Transferase</keyword>
<keyword id="KW-0812">Transmembrane</keyword>
<keyword id="KW-1133">Transmembrane helix</keyword>
<dbReference type="EC" id="2.4.1.256" evidence="1"/>
<dbReference type="EMBL" id="CM002239">
    <property type="protein sequence ID" value="ESA43000.1"/>
    <property type="molecule type" value="Genomic_DNA"/>
</dbReference>
<dbReference type="RefSeq" id="XP_011394421.1">
    <property type="nucleotide sequence ID" value="XM_011396119.1"/>
</dbReference>
<dbReference type="FunCoup" id="Q7SA35">
    <property type="interactions" value="652"/>
</dbReference>
<dbReference type="STRING" id="367110.Q7SA35"/>
<dbReference type="GlyCosmos" id="Q7SA35">
    <property type="glycosylation" value="1 site, No reported glycans"/>
</dbReference>
<dbReference type="EnsemblFungi" id="ESA43000">
    <property type="protein sequence ID" value="ESA43000"/>
    <property type="gene ID" value="NCU16845"/>
</dbReference>
<dbReference type="GeneID" id="23569685"/>
<dbReference type="KEGG" id="ncr:NCU16845"/>
<dbReference type="VEuPathDB" id="FungiDB:NCU16845"/>
<dbReference type="HOGENOM" id="CLU_017053_0_0_1"/>
<dbReference type="InParanoid" id="Q7SA35"/>
<dbReference type="OrthoDB" id="4769at2759"/>
<dbReference type="UniPathway" id="UPA00378"/>
<dbReference type="Proteomes" id="UP000001805">
    <property type="component" value="Chromosome 4, Linkage Group IV"/>
</dbReference>
<dbReference type="GO" id="GO:0005783">
    <property type="term" value="C:endoplasmic reticulum"/>
    <property type="evidence" value="ECO:0000318"/>
    <property type="project" value="GO_Central"/>
</dbReference>
<dbReference type="GO" id="GO:0005789">
    <property type="term" value="C:endoplasmic reticulum membrane"/>
    <property type="evidence" value="ECO:0007669"/>
    <property type="project" value="UniProtKB-SubCell"/>
</dbReference>
<dbReference type="GO" id="GO:0106073">
    <property type="term" value="F:dolichyl pyrophosphate Glc2Man9GlcNAc2 alpha-1,2-glucosyltransferase activity"/>
    <property type="evidence" value="ECO:0000318"/>
    <property type="project" value="GO_Central"/>
</dbReference>
<dbReference type="GO" id="GO:0006488">
    <property type="term" value="P:dolichol-linked oligosaccharide biosynthetic process"/>
    <property type="evidence" value="ECO:0007669"/>
    <property type="project" value="InterPro"/>
</dbReference>
<dbReference type="GO" id="GO:0006487">
    <property type="term" value="P:protein N-linked glycosylation"/>
    <property type="evidence" value="ECO:0000318"/>
    <property type="project" value="GO_Central"/>
</dbReference>
<dbReference type="InterPro" id="IPR016900">
    <property type="entry name" value="Alg10"/>
</dbReference>
<dbReference type="PANTHER" id="PTHR12989">
    <property type="entry name" value="ALPHA-1,2-GLUCOSYLTRANSFERASE ALG10"/>
    <property type="match status" value="1"/>
</dbReference>
<dbReference type="PANTHER" id="PTHR12989:SF10">
    <property type="entry name" value="DOL-P-GLC:GLC(2)MAN(9)GLCNAC(2)-PP-DOL ALPHA-1,2-GLUCOSYLTRANSFERASE-RELATED"/>
    <property type="match status" value="1"/>
</dbReference>
<dbReference type="Pfam" id="PF04922">
    <property type="entry name" value="DIE2_ALG10"/>
    <property type="match status" value="2"/>
</dbReference>
<reference key="1">
    <citation type="journal article" date="2003" name="Nature">
        <title>The genome sequence of the filamentous fungus Neurospora crassa.</title>
        <authorList>
            <person name="Galagan J.E."/>
            <person name="Calvo S.E."/>
            <person name="Borkovich K.A."/>
            <person name="Selker E.U."/>
            <person name="Read N.D."/>
            <person name="Jaffe D.B."/>
            <person name="FitzHugh W."/>
            <person name="Ma L.-J."/>
            <person name="Smirnov S."/>
            <person name="Purcell S."/>
            <person name="Rehman B."/>
            <person name="Elkins T."/>
            <person name="Engels R."/>
            <person name="Wang S."/>
            <person name="Nielsen C.B."/>
            <person name="Butler J."/>
            <person name="Endrizzi M."/>
            <person name="Qui D."/>
            <person name="Ianakiev P."/>
            <person name="Bell-Pedersen D."/>
            <person name="Nelson M.A."/>
            <person name="Werner-Washburne M."/>
            <person name="Selitrennikoff C.P."/>
            <person name="Kinsey J.A."/>
            <person name="Braun E.L."/>
            <person name="Zelter A."/>
            <person name="Schulte U."/>
            <person name="Kothe G.O."/>
            <person name="Jedd G."/>
            <person name="Mewes H.-W."/>
            <person name="Staben C."/>
            <person name="Marcotte E."/>
            <person name="Greenberg D."/>
            <person name="Roy A."/>
            <person name="Foley K."/>
            <person name="Naylor J."/>
            <person name="Stange-Thomann N."/>
            <person name="Barrett R."/>
            <person name="Gnerre S."/>
            <person name="Kamal M."/>
            <person name="Kamvysselis M."/>
            <person name="Mauceli E.W."/>
            <person name="Bielke C."/>
            <person name="Rudd S."/>
            <person name="Frishman D."/>
            <person name="Krystofova S."/>
            <person name="Rasmussen C."/>
            <person name="Metzenberg R.L."/>
            <person name="Perkins D.D."/>
            <person name="Kroken S."/>
            <person name="Cogoni C."/>
            <person name="Macino G."/>
            <person name="Catcheside D.E.A."/>
            <person name="Li W."/>
            <person name="Pratt R.J."/>
            <person name="Osmani S.A."/>
            <person name="DeSouza C.P.C."/>
            <person name="Glass N.L."/>
            <person name="Orbach M.J."/>
            <person name="Berglund J.A."/>
            <person name="Voelker R."/>
            <person name="Yarden O."/>
            <person name="Plamann M."/>
            <person name="Seiler S."/>
            <person name="Dunlap J.C."/>
            <person name="Radford A."/>
            <person name="Aramayo R."/>
            <person name="Natvig D.O."/>
            <person name="Alex L.A."/>
            <person name="Mannhaupt G."/>
            <person name="Ebbole D.J."/>
            <person name="Freitag M."/>
            <person name="Paulsen I."/>
            <person name="Sachs M.S."/>
            <person name="Lander E.S."/>
            <person name="Nusbaum C."/>
            <person name="Birren B.W."/>
        </authorList>
    </citation>
    <scope>NUCLEOTIDE SEQUENCE [LARGE SCALE GENOMIC DNA]</scope>
    <source>
        <strain>ATCC 24698 / 74-OR23-1A / CBS 708.71 / DSM 1257 / FGSC 987</strain>
    </source>
</reference>
<name>ALG10_NEUCR</name>
<feature type="chain" id="PRO_0000215459" description="Dol-P-Glc:Glc(2)Man(9)GlcNAc(2)-PP-Dol alpha-1,2-glucosyltransferase">
    <location>
        <begin position="1"/>
        <end position="771"/>
    </location>
</feature>
<feature type="transmembrane region" description="Helical" evidence="2">
    <location>
        <begin position="45"/>
        <end position="65"/>
    </location>
</feature>
<feature type="transmembrane region" description="Helical" evidence="2">
    <location>
        <begin position="160"/>
        <end position="180"/>
    </location>
</feature>
<feature type="transmembrane region" description="Helical" evidence="2">
    <location>
        <begin position="182"/>
        <end position="202"/>
    </location>
</feature>
<feature type="transmembrane region" description="Helical" evidence="2">
    <location>
        <begin position="221"/>
        <end position="241"/>
    </location>
</feature>
<feature type="transmembrane region" description="Helical" evidence="2">
    <location>
        <begin position="293"/>
        <end position="313"/>
    </location>
</feature>
<feature type="transmembrane region" description="Helical" evidence="2">
    <location>
        <begin position="326"/>
        <end position="346"/>
    </location>
</feature>
<feature type="transmembrane region" description="Helical" evidence="2">
    <location>
        <begin position="357"/>
        <end position="377"/>
    </location>
</feature>
<feature type="transmembrane region" description="Helical" evidence="2">
    <location>
        <begin position="469"/>
        <end position="489"/>
    </location>
</feature>
<feature type="transmembrane region" description="Helical" evidence="2">
    <location>
        <begin position="503"/>
        <end position="525"/>
    </location>
</feature>
<feature type="transmembrane region" description="Helical" evidence="2">
    <location>
        <begin position="631"/>
        <end position="651"/>
    </location>
</feature>
<feature type="transmembrane region" description="Helical" evidence="2">
    <location>
        <begin position="656"/>
        <end position="676"/>
    </location>
</feature>
<feature type="transmembrane region" description="Helical" evidence="2">
    <location>
        <begin position="728"/>
        <end position="748"/>
    </location>
</feature>
<feature type="region of interest" description="Disordered" evidence="3">
    <location>
        <begin position="392"/>
        <end position="449"/>
    </location>
</feature>
<feature type="region of interest" description="Disordered" evidence="3">
    <location>
        <begin position="584"/>
        <end position="605"/>
    </location>
</feature>
<feature type="region of interest" description="Disordered" evidence="3">
    <location>
        <begin position="682"/>
        <end position="708"/>
    </location>
</feature>
<feature type="compositionally biased region" description="Low complexity" evidence="3">
    <location>
        <begin position="411"/>
        <end position="426"/>
    </location>
</feature>
<feature type="compositionally biased region" description="Low complexity" evidence="3">
    <location>
        <begin position="435"/>
        <end position="449"/>
    </location>
</feature>
<feature type="compositionally biased region" description="Basic and acidic residues" evidence="3">
    <location>
        <begin position="584"/>
        <end position="593"/>
    </location>
</feature>
<feature type="compositionally biased region" description="Acidic residues" evidence="3">
    <location>
        <begin position="594"/>
        <end position="604"/>
    </location>
</feature>
<feature type="glycosylation site" description="N-linked (GlcNAc...) asparagine" evidence="2">
    <location>
        <position position="448"/>
    </location>
</feature>
<comment type="function">
    <text evidence="1">Dol-P-Glc:Glc(2)Man(9)GlcNAc(2)-PP-Dol alpha-1,2-glucosyltransferase that operates in the biosynthetic pathway of dolichol-linked oligosaccharides, the glycan precursors employed in protein asparagine (N)-glycosylation. The assembly of dolichol-linked oligosaccharides begins on the cytosolic side of the endoplasmic reticulum membrane and finishes in its lumen. The sequential addition of sugars to dolichol pyrophosphate produces dolichol-linked oligosaccharides containing fourteen sugars, including two GlcNAcs, nine mannoses and three glucoses. Once assembled, the oligosaccharide is transferred from the lipid to nascent proteins by oligosaccharyltransferases. In the lumen of the endoplasmic reticulum, adds the third and last glucose residue from dolichyl phosphate glucose (Dol-P-Glc) onto the lipid-linked oligosaccharide intermediate Glc(2)Man(9)GlcNAc(2)-PP-Dol to produce Glc(3)Man(9)GlcNAc(2)-PP-Dol.</text>
</comment>
<comment type="catalytic activity">
    <reaction evidence="1">
        <text>an alpha-D-Glc-(1-&gt;3)-alpha-D-Glc-(1-&gt;3)-alpha-D-Man-(1-&gt;2)-alpha-D-Man-(1-&gt;2)-alpha-D-Man-(1-&gt;3)-[alpha-D-Man-(1-&gt;2)-alpha-D-Man-(1-&gt;3)-[alpha-D-Man-(1-&gt;2)-alpha-D-Man-(1-&gt;6)]-alpha-D-Man-(1-&gt;6)]-beta-D-Man-(1-&gt;4)-beta-D-GlcNAc-(1-&gt;4)-alpha-D-GlcNAc-diphospho-di-trans,poly-cis-dolichol + a di-trans,poly-cis-dolichyl beta-D-glucosyl phosphate = a alpha-D-Glc-(1-&gt;2)-alpha-D-Glc-(1-&gt;3)-alpha-D-Glc-(1-&gt;3)-alpha-D-Man-(1-&gt;2)-alpha-D-Man-(1-&gt;2)-alpha-D-Man-(1-&gt;3)-[alpha-D-Man-(1-&gt;2)-alpha-D-Man-(1-&gt;3)-[alpha-D-Man-(1-&gt;2)-alpha-D-Man-(1-&gt;6)]-alpha-D-Man-(1-&gt;6)]-beta-D-Man-(1-&gt;4)-beta-D-GlcNAc-(1-&gt;4)-alpha-D-GlcNAc-diphospho-di-trans,poly-cis-dolichol + a di-trans,poly-cis-dolichyl phosphate + H(+)</text>
        <dbReference type="Rhea" id="RHEA:29543"/>
        <dbReference type="Rhea" id="RHEA-COMP:19498"/>
        <dbReference type="Rhea" id="RHEA-COMP:19502"/>
        <dbReference type="Rhea" id="RHEA-COMP:19512"/>
        <dbReference type="Rhea" id="RHEA-COMP:19522"/>
        <dbReference type="ChEBI" id="CHEBI:15378"/>
        <dbReference type="ChEBI" id="CHEBI:57525"/>
        <dbReference type="ChEBI" id="CHEBI:57683"/>
        <dbReference type="ChEBI" id="CHEBI:132522"/>
        <dbReference type="ChEBI" id="CHEBI:132523"/>
        <dbReference type="EC" id="2.4.1.256"/>
    </reaction>
    <physiologicalReaction direction="left-to-right" evidence="1">
        <dbReference type="Rhea" id="RHEA:29544"/>
    </physiologicalReaction>
</comment>
<comment type="pathway">
    <text evidence="1">Protein modification; protein glycosylation.</text>
</comment>
<comment type="subcellular location">
    <subcellularLocation>
        <location evidence="1">Endoplasmic reticulum membrane</location>
        <topology evidence="2">Multi-pass membrane protein</topology>
    </subcellularLocation>
</comment>
<comment type="similarity">
    <text evidence="4">Belongs to the ALG10 glucosyltransferase family.</text>
</comment>
<sequence>MMDALRVLLETSTFNEVLRGLAISILLAKLTQSTTSSSKSQGSTFITASGFILIYFFARSWLALVNHYAPEPYLDEVFHIPQAQTYCEGRYHEWDNKITTPPGLYLLSVGWHKLVRLVECTPSSLRSNNLVATLLIALIALSCRRRIEAQTAVGIEKSAVSFYAYHTAINIALFPVIFFFSGLYYTDVASTLVMLVAYWNHLNRVASHSEKPGFLNGLWTVVLGVAALFMRQTNVFWVVVYMGGLEAAHVVKGLKPKPVSKNDTPDFVLENIRDSFGFWLRRYAVGDVHDPPVDMAWPDDWALCLLSIGIAALCNPLRVLRQVWPHITIMGLFAGFVAWNGGVVLGDKSNHIATIHLPQMLYIWPFFAFFSAPLLIPRVLSTLADLITHARTPTPSHTTTKDPGRSSWRFTKPSITSKKSSTTKPPQRSGPTPASSSSSSSSFSPDTNSSGRGFRFILDLVLSRKLYYPFYLLATILLSAAIIHYNTIIHPFTLADNRHYMFYIFRYTILRSSLVRLALVAAYTLSRWLIWKRLEGNNPPLRDLAGETGLKITKNKLGWRDEFSASPFVTQDFYGPKTIKTDEQKNIKDKQKEVEEEEEEEEKEDWLIGGAYTTLSLSSTQPSPATSSPPTSTVLLWLLTTTLSLVTAPLVEPRYFILPWVFYRLLVPAMPVSSSLVSSSSSSSFASSTTESGNGDGNDAATAARQQQNGNGKRGLLWNIIRRTDAALALETVWFLAINIGTMYMFLFKPFYWKTASGEMLDGGRLQRFMW</sequence>
<accession>Q7SA35</accession>
<accession>V5INS8</accession>
<evidence type="ECO:0000250" key="1">
    <source>
        <dbReference type="UniProtKB" id="P50076"/>
    </source>
</evidence>
<evidence type="ECO:0000255" key="2"/>
<evidence type="ECO:0000256" key="3">
    <source>
        <dbReference type="SAM" id="MobiDB-lite"/>
    </source>
</evidence>
<evidence type="ECO:0000305" key="4"/>
<proteinExistence type="inferred from homology"/>
<gene>
    <name type="primary">alg-10</name>
    <name type="ORF">NCU16845</name>
</gene>
<organism>
    <name type="scientific">Neurospora crassa (strain ATCC 24698 / 74-OR23-1A / CBS 708.71 / DSM 1257 / FGSC 987)</name>
    <dbReference type="NCBI Taxonomy" id="367110"/>
    <lineage>
        <taxon>Eukaryota</taxon>
        <taxon>Fungi</taxon>
        <taxon>Dikarya</taxon>
        <taxon>Ascomycota</taxon>
        <taxon>Pezizomycotina</taxon>
        <taxon>Sordariomycetes</taxon>
        <taxon>Sordariomycetidae</taxon>
        <taxon>Sordariales</taxon>
        <taxon>Sordariaceae</taxon>
        <taxon>Neurospora</taxon>
    </lineage>
</organism>
<protein>
    <recommendedName>
        <fullName evidence="1">Dol-P-Glc:Glc(2)Man(9)GlcNAc(2)-PP-Dol alpha-1,2-glucosyltransferase</fullName>
        <ecNumber evidence="1">2.4.1.256</ecNumber>
    </recommendedName>
    <alternativeName>
        <fullName>Alpha-1,2-glucosyltransferase alg-10</fullName>
    </alternativeName>
    <alternativeName>
        <fullName>Alpha-2-glucosyltransferase alg-10</fullName>
    </alternativeName>
    <alternativeName>
        <fullName>Asparagine-linked glycosylation protein 10</fullName>
    </alternativeName>
    <alternativeName>
        <fullName>Dolichyl-phosphoglucose-dependent glucosyltransferase alg-10</fullName>
    </alternativeName>
</protein>